<comment type="function">
    <text evidence="1">NDH-1 shuttles electrons from NADH, via FMN and iron-sulfur (Fe-S) centers, to quinones in the respiratory chain. The immediate electron acceptor for the enzyme in this species is believed to be ubiquinone. Couples the redox reaction to proton translocation (for every two electrons transferred, four hydrogen ions are translocated across the cytoplasmic membrane), and thus conserves the redox energy in a proton gradient.</text>
</comment>
<comment type="catalytic activity">
    <reaction evidence="1">
        <text>a quinone + NADH + 5 H(+)(in) = a quinol + NAD(+) + 4 H(+)(out)</text>
        <dbReference type="Rhea" id="RHEA:57888"/>
        <dbReference type="ChEBI" id="CHEBI:15378"/>
        <dbReference type="ChEBI" id="CHEBI:24646"/>
        <dbReference type="ChEBI" id="CHEBI:57540"/>
        <dbReference type="ChEBI" id="CHEBI:57945"/>
        <dbReference type="ChEBI" id="CHEBI:132124"/>
    </reaction>
</comment>
<comment type="cofactor">
    <cofactor evidence="1">
        <name>[4Fe-4S] cluster</name>
        <dbReference type="ChEBI" id="CHEBI:49883"/>
    </cofactor>
    <text evidence="1">Binds 2 [4Fe-4S] clusters per subunit.</text>
</comment>
<comment type="subunit">
    <text evidence="1">NDH-1 is composed of 14 different subunits. Subunits NuoA, H, J, K, L, M, N constitute the membrane sector of the complex.</text>
</comment>
<comment type="subcellular location">
    <subcellularLocation>
        <location evidence="1">Cell inner membrane</location>
        <topology evidence="1">Peripheral membrane protein</topology>
    </subcellularLocation>
</comment>
<comment type="similarity">
    <text evidence="1">Belongs to the complex I 23 kDa subunit family.</text>
</comment>
<name>NUOI2_ANADE</name>
<proteinExistence type="inferred from homology"/>
<protein>
    <recommendedName>
        <fullName evidence="1">NADH-quinone oxidoreductase subunit I 2</fullName>
        <ecNumber evidence="1">7.1.1.-</ecNumber>
    </recommendedName>
    <alternativeName>
        <fullName evidence="1">NADH dehydrogenase I subunit I 2</fullName>
    </alternativeName>
    <alternativeName>
        <fullName evidence="1">NDH-1 subunit I 2</fullName>
    </alternativeName>
</protein>
<reference key="1">
    <citation type="submission" date="2006-01" db="EMBL/GenBank/DDBJ databases">
        <title>Complete sequence of Anaeromyxobacter dehalogenans 2CP-C.</title>
        <authorList>
            <person name="Copeland A."/>
            <person name="Lucas S."/>
            <person name="Lapidus A."/>
            <person name="Barry K."/>
            <person name="Detter J.C."/>
            <person name="Glavina T."/>
            <person name="Hammon N."/>
            <person name="Israni S."/>
            <person name="Pitluck S."/>
            <person name="Brettin T."/>
            <person name="Bruce D."/>
            <person name="Han C."/>
            <person name="Tapia R."/>
            <person name="Gilna P."/>
            <person name="Kiss H."/>
            <person name="Schmutz J."/>
            <person name="Larimer F."/>
            <person name="Land M."/>
            <person name="Kyrpides N."/>
            <person name="Anderson I."/>
            <person name="Sanford R.A."/>
            <person name="Ritalahti K.M."/>
            <person name="Thomas H.S."/>
            <person name="Kirby J.R."/>
            <person name="Zhulin I.B."/>
            <person name="Loeffler F.E."/>
            <person name="Richardson P."/>
        </authorList>
    </citation>
    <scope>NUCLEOTIDE SEQUENCE [LARGE SCALE GENOMIC DNA]</scope>
    <source>
        <strain>2CP-C</strain>
    </source>
</reference>
<sequence length="264" mass="28065">MPQTVRAYTGAIRDTVKSFWHGLSITLSYLARRPTTVQYPDRTPMPVRDMLPPRYRGFLEVDSGICTGCQACERACPIGCIQISLEKDAANPKQRVVTQFDIDEAKCMFCGLCVEPCPTGSIQHTREFEGTHKHIRNLVFRWADPMNPFPVYKVDKNAEYYPRVPLGSLVRQRLETMAWDRSAPQFLPPEPPKPAEAKPAAKAAPAAKPAAAAPAAPAAAAPAAAPAPAKPAAAPAPAAAAAPAAPAAEAPAAPAAPAANPESK</sequence>
<evidence type="ECO:0000255" key="1">
    <source>
        <dbReference type="HAMAP-Rule" id="MF_01351"/>
    </source>
</evidence>
<evidence type="ECO:0000256" key="2">
    <source>
        <dbReference type="SAM" id="MobiDB-lite"/>
    </source>
</evidence>
<keyword id="KW-0004">4Fe-4S</keyword>
<keyword id="KW-0997">Cell inner membrane</keyword>
<keyword id="KW-1003">Cell membrane</keyword>
<keyword id="KW-0408">Iron</keyword>
<keyword id="KW-0411">Iron-sulfur</keyword>
<keyword id="KW-0472">Membrane</keyword>
<keyword id="KW-0479">Metal-binding</keyword>
<keyword id="KW-0520">NAD</keyword>
<keyword id="KW-0874">Quinone</keyword>
<keyword id="KW-1185">Reference proteome</keyword>
<keyword id="KW-0677">Repeat</keyword>
<keyword id="KW-1278">Translocase</keyword>
<keyword id="KW-0830">Ubiquinone</keyword>
<dbReference type="EC" id="7.1.1.-" evidence="1"/>
<dbReference type="EMBL" id="CP000251">
    <property type="protein sequence ID" value="ABC82346.1"/>
    <property type="molecule type" value="Genomic_DNA"/>
</dbReference>
<dbReference type="RefSeq" id="WP_011421628.1">
    <property type="nucleotide sequence ID" value="NC_007760.1"/>
</dbReference>
<dbReference type="STRING" id="290397.Adeh_2576"/>
<dbReference type="KEGG" id="ade:Adeh_2576"/>
<dbReference type="eggNOG" id="COG1143">
    <property type="taxonomic scope" value="Bacteria"/>
</dbReference>
<dbReference type="HOGENOM" id="CLU_085275_0_0_7"/>
<dbReference type="OrthoDB" id="9808559at2"/>
<dbReference type="Proteomes" id="UP000001935">
    <property type="component" value="Chromosome"/>
</dbReference>
<dbReference type="GO" id="GO:0005886">
    <property type="term" value="C:plasma membrane"/>
    <property type="evidence" value="ECO:0007669"/>
    <property type="project" value="UniProtKB-SubCell"/>
</dbReference>
<dbReference type="GO" id="GO:0051539">
    <property type="term" value="F:4 iron, 4 sulfur cluster binding"/>
    <property type="evidence" value="ECO:0007669"/>
    <property type="project" value="UniProtKB-KW"/>
</dbReference>
<dbReference type="GO" id="GO:0005506">
    <property type="term" value="F:iron ion binding"/>
    <property type="evidence" value="ECO:0007669"/>
    <property type="project" value="UniProtKB-UniRule"/>
</dbReference>
<dbReference type="GO" id="GO:0050136">
    <property type="term" value="F:NADH:ubiquinone reductase (non-electrogenic) activity"/>
    <property type="evidence" value="ECO:0007669"/>
    <property type="project" value="UniProtKB-UniRule"/>
</dbReference>
<dbReference type="GO" id="GO:0048038">
    <property type="term" value="F:quinone binding"/>
    <property type="evidence" value="ECO:0007669"/>
    <property type="project" value="UniProtKB-KW"/>
</dbReference>
<dbReference type="Gene3D" id="3.30.70.3270">
    <property type="match status" value="1"/>
</dbReference>
<dbReference type="HAMAP" id="MF_01351">
    <property type="entry name" value="NDH1_NuoI"/>
    <property type="match status" value="1"/>
</dbReference>
<dbReference type="InterPro" id="IPR017896">
    <property type="entry name" value="4Fe4S_Fe-S-bd"/>
</dbReference>
<dbReference type="InterPro" id="IPR017900">
    <property type="entry name" value="4Fe4S_Fe_S_CS"/>
</dbReference>
<dbReference type="InterPro" id="IPR010226">
    <property type="entry name" value="NADH_quinone_OxRdtase_chainI"/>
</dbReference>
<dbReference type="PANTHER" id="PTHR10849">
    <property type="entry name" value="NADH DEHYDROGENASE UBIQUINONE IRON-SULFUR PROTEIN 8, MITOCHONDRIAL"/>
    <property type="match status" value="1"/>
</dbReference>
<dbReference type="PANTHER" id="PTHR10849:SF24">
    <property type="entry name" value="NADH-QUINONE OXIDOREDUCTASE SUBUNIT I 2"/>
    <property type="match status" value="1"/>
</dbReference>
<dbReference type="Pfam" id="PF12838">
    <property type="entry name" value="Fer4_7"/>
    <property type="match status" value="1"/>
</dbReference>
<dbReference type="SUPFAM" id="SSF54862">
    <property type="entry name" value="4Fe-4S ferredoxins"/>
    <property type="match status" value="1"/>
</dbReference>
<dbReference type="PROSITE" id="PS00198">
    <property type="entry name" value="4FE4S_FER_1"/>
    <property type="match status" value="2"/>
</dbReference>
<dbReference type="PROSITE" id="PS51379">
    <property type="entry name" value="4FE4S_FER_2"/>
    <property type="match status" value="2"/>
</dbReference>
<organism>
    <name type="scientific">Anaeromyxobacter dehalogenans (strain 2CP-C)</name>
    <dbReference type="NCBI Taxonomy" id="290397"/>
    <lineage>
        <taxon>Bacteria</taxon>
        <taxon>Pseudomonadati</taxon>
        <taxon>Myxococcota</taxon>
        <taxon>Myxococcia</taxon>
        <taxon>Myxococcales</taxon>
        <taxon>Cystobacterineae</taxon>
        <taxon>Anaeromyxobacteraceae</taxon>
        <taxon>Anaeromyxobacter</taxon>
    </lineage>
</organism>
<feature type="chain" id="PRO_0000245697" description="NADH-quinone oxidoreductase subunit I 2">
    <location>
        <begin position="1"/>
        <end position="264"/>
    </location>
</feature>
<feature type="domain" description="4Fe-4S ferredoxin-type 1" evidence="1">
    <location>
        <begin position="57"/>
        <end position="86"/>
    </location>
</feature>
<feature type="domain" description="4Fe-4S ferredoxin-type 2" evidence="1">
    <location>
        <begin position="98"/>
        <end position="127"/>
    </location>
</feature>
<feature type="region of interest" description="Disordered" evidence="2">
    <location>
        <begin position="183"/>
        <end position="264"/>
    </location>
</feature>
<feature type="compositionally biased region" description="Low complexity" evidence="2">
    <location>
        <begin position="197"/>
        <end position="264"/>
    </location>
</feature>
<feature type="binding site" evidence="1">
    <location>
        <position position="66"/>
    </location>
    <ligand>
        <name>[4Fe-4S] cluster</name>
        <dbReference type="ChEBI" id="CHEBI:49883"/>
        <label>1</label>
    </ligand>
</feature>
<feature type="binding site" evidence="1">
    <location>
        <position position="69"/>
    </location>
    <ligand>
        <name>[4Fe-4S] cluster</name>
        <dbReference type="ChEBI" id="CHEBI:49883"/>
        <label>1</label>
    </ligand>
</feature>
<feature type="binding site" evidence="1">
    <location>
        <position position="72"/>
    </location>
    <ligand>
        <name>[4Fe-4S] cluster</name>
        <dbReference type="ChEBI" id="CHEBI:49883"/>
        <label>1</label>
    </ligand>
</feature>
<feature type="binding site" evidence="1">
    <location>
        <position position="76"/>
    </location>
    <ligand>
        <name>[4Fe-4S] cluster</name>
        <dbReference type="ChEBI" id="CHEBI:49883"/>
        <label>2</label>
    </ligand>
</feature>
<feature type="binding site" evidence="1">
    <location>
        <position position="107"/>
    </location>
    <ligand>
        <name>[4Fe-4S] cluster</name>
        <dbReference type="ChEBI" id="CHEBI:49883"/>
        <label>2</label>
    </ligand>
</feature>
<feature type="binding site" evidence="1">
    <location>
        <position position="110"/>
    </location>
    <ligand>
        <name>[4Fe-4S] cluster</name>
        <dbReference type="ChEBI" id="CHEBI:49883"/>
        <label>2</label>
    </ligand>
</feature>
<feature type="binding site" evidence="1">
    <location>
        <position position="113"/>
    </location>
    <ligand>
        <name>[4Fe-4S] cluster</name>
        <dbReference type="ChEBI" id="CHEBI:49883"/>
        <label>2</label>
    </ligand>
</feature>
<feature type="binding site" evidence="1">
    <location>
        <position position="117"/>
    </location>
    <ligand>
        <name>[4Fe-4S] cluster</name>
        <dbReference type="ChEBI" id="CHEBI:49883"/>
        <label>1</label>
    </ligand>
</feature>
<gene>
    <name evidence="1" type="primary">nuoI2</name>
    <name type="ordered locus">Adeh_2576</name>
</gene>
<accession>Q2IL14</accession>